<feature type="transit peptide" description="Mitochondrion" evidence="2">
    <location>
        <begin position="1"/>
        <end position="32"/>
    </location>
</feature>
<feature type="chain" id="PRO_0000045792" description="Chaperonin CPN60-like 1, mitochondrial">
    <location>
        <begin position="33"/>
        <end position="585"/>
    </location>
</feature>
<gene>
    <name type="ordered locus">At2g33210</name>
    <name type="ORF">F25I18.5</name>
</gene>
<protein>
    <recommendedName>
        <fullName>Chaperonin CPN60-like 1, mitochondrial</fullName>
    </recommendedName>
    <alternativeName>
        <fullName>HSP60-like 1</fullName>
    </alternativeName>
</protein>
<sequence length="585" mass="61978">MYRLVSNVASKARIARKCTSQIGSRLNSTRNYAAKDIRFGVEARALMLRGVEDLADAVKVTMGPKGRNVIIEQSWGAPKVTKDGVTVAKSIEFKDRIKNVGASLVKQVANATNDVAGDGTTCATVLTRAIFTEGCKSVAAGMNAMDLRRGIKLAVDTVVTNLQSRARMISTSEEIAQVGTISANGDREIGELIAKAMETVGKEGVITIQDGKTLFNELEVVEGMKIDRGYISPYFITNPKTQKCELEDPLILIHEKKISNINAMVKVLELALKKQRPLLIVAEDVESDALATLILNKLRANIKVCAVKAPGFGENRKANLHDLAALTGAQVITEELGMNLDNIDLSMFGNCKKVTVSKDDTVVLDGAGDKQAIGERCEQIRSMVEASTSDYDKEKLQERLAKLSGGVAVLKIGGASETEVSEKKDRVTDALNATKAAVEEGIVPGGGVALLYASKELEKLSTANFDQKIGVQIIQNALKTPVYTIASNAGVEGAVVVGKLLEQDNPDLGYDAAKGEYVDMIKAGIIDPLKVIRTALVDAASVSSLLTTTEAVVTEIPTKEVASPGMGGGGMGGMGGMGGMGGMGF</sequence>
<comment type="function">
    <text evidence="1">Implicated in mitochondrial protein import and macromolecular assembly. May facilitate the correct folding of imported proteins. May also prevent misfolding and promote the refolding and proper assembly of unfolded polypeptides generated under stress conditions in the mitochondrial matrix (By similarity).</text>
</comment>
<comment type="subcellular location">
    <subcellularLocation>
        <location evidence="3">Mitochondrion</location>
    </subcellularLocation>
</comment>
<comment type="alternative products">
    <event type="alternative splicing"/>
    <isoform>
        <id>Q8L7B5-1</id>
        <name>1</name>
        <sequence type="displayed"/>
    </isoform>
    <text>A number of isoforms are produced. According to EST sequences.</text>
</comment>
<comment type="similarity">
    <text evidence="4">Belongs to the chaperonin (HSP60) family.</text>
</comment>
<comment type="sequence caution" evidence="4">
    <conflict type="erroneous gene model prediction">
        <sequence resource="EMBL-CDS" id="AAC04902"/>
    </conflict>
</comment>
<name>CH60B_ARATH</name>
<accession>Q8L7B5</accession>
<accession>O49314</accession>
<proteinExistence type="evidence at protein level"/>
<dbReference type="EMBL" id="AC002334">
    <property type="protein sequence ID" value="AAC04902.1"/>
    <property type="status" value="ALT_SEQ"/>
    <property type="molecule type" value="Genomic_DNA"/>
</dbReference>
<dbReference type="EMBL" id="CP002685">
    <property type="protein sequence ID" value="AEC08799.1"/>
    <property type="molecule type" value="Genomic_DNA"/>
</dbReference>
<dbReference type="EMBL" id="AY136360">
    <property type="protein sequence ID" value="AAM97026.1"/>
    <property type="molecule type" value="mRNA"/>
</dbReference>
<dbReference type="EMBL" id="BT000103">
    <property type="protein sequence ID" value="AAN15422.1"/>
    <property type="molecule type" value="mRNA"/>
</dbReference>
<dbReference type="EMBL" id="AK175415">
    <property type="protein sequence ID" value="BAD43178.1"/>
    <property type="molecule type" value="mRNA"/>
</dbReference>
<dbReference type="PIR" id="F84742">
    <property type="entry name" value="F84742"/>
</dbReference>
<dbReference type="RefSeq" id="NP_850203.1">
    <molecule id="Q8L7B5-1"/>
    <property type="nucleotide sequence ID" value="NM_179872.3"/>
</dbReference>
<dbReference type="SMR" id="Q8L7B5"/>
<dbReference type="BioGRID" id="3230">
    <property type="interactions" value="67"/>
</dbReference>
<dbReference type="FunCoup" id="Q8L7B5">
    <property type="interactions" value="2824"/>
</dbReference>
<dbReference type="IntAct" id="Q8L7B5">
    <property type="interactions" value="2"/>
</dbReference>
<dbReference type="STRING" id="3702.Q8L7B5"/>
<dbReference type="iPTMnet" id="Q8L7B5"/>
<dbReference type="MetOSite" id="Q8L7B5"/>
<dbReference type="PaxDb" id="3702-AT2G33210.1"/>
<dbReference type="EnsemblPlants" id="AT2G33210.1">
    <molecule id="Q8L7B5-1"/>
    <property type="protein sequence ID" value="AT2G33210.1"/>
    <property type="gene ID" value="AT2G33210"/>
</dbReference>
<dbReference type="GeneID" id="817883"/>
<dbReference type="Gramene" id="AT2G33210.1">
    <molecule id="Q8L7B5-1"/>
    <property type="protein sequence ID" value="AT2G33210.1"/>
    <property type="gene ID" value="AT2G33210"/>
</dbReference>
<dbReference type="KEGG" id="ath:AT2G33210"/>
<dbReference type="Araport" id="AT2G33210"/>
<dbReference type="TAIR" id="AT2G33210">
    <property type="gene designation" value="HSP60-2"/>
</dbReference>
<dbReference type="eggNOG" id="KOG0356">
    <property type="taxonomic scope" value="Eukaryota"/>
</dbReference>
<dbReference type="HOGENOM" id="CLU_016503_3_0_1"/>
<dbReference type="InParanoid" id="Q8L7B5"/>
<dbReference type="PhylomeDB" id="Q8L7B5"/>
<dbReference type="CD-CODE" id="4299E36E">
    <property type="entry name" value="Nucleolus"/>
</dbReference>
<dbReference type="PRO" id="PR:Q8L7B5"/>
<dbReference type="Proteomes" id="UP000006548">
    <property type="component" value="Chromosome 2"/>
</dbReference>
<dbReference type="ExpressionAtlas" id="Q8L7B5">
    <property type="expression patterns" value="baseline and differential"/>
</dbReference>
<dbReference type="GO" id="GO:0009941">
    <property type="term" value="C:chloroplast envelope"/>
    <property type="evidence" value="ECO:0007005"/>
    <property type="project" value="TAIR"/>
</dbReference>
<dbReference type="GO" id="GO:0009570">
    <property type="term" value="C:chloroplast stroma"/>
    <property type="evidence" value="ECO:0007005"/>
    <property type="project" value="TAIR"/>
</dbReference>
<dbReference type="GO" id="GO:0005829">
    <property type="term" value="C:cytosol"/>
    <property type="evidence" value="ECO:0007005"/>
    <property type="project" value="TAIR"/>
</dbReference>
<dbReference type="GO" id="GO:0005783">
    <property type="term" value="C:endoplasmic reticulum"/>
    <property type="evidence" value="ECO:0007005"/>
    <property type="project" value="TAIR"/>
</dbReference>
<dbReference type="GO" id="GO:0005739">
    <property type="term" value="C:mitochondrion"/>
    <property type="evidence" value="ECO:0007005"/>
    <property type="project" value="TAIR"/>
</dbReference>
<dbReference type="GO" id="GO:0000325">
    <property type="term" value="C:plant-type vacuole"/>
    <property type="evidence" value="ECO:0007005"/>
    <property type="project" value="TAIR"/>
</dbReference>
<dbReference type="GO" id="GO:0005524">
    <property type="term" value="F:ATP binding"/>
    <property type="evidence" value="ECO:0007005"/>
    <property type="project" value="TAIR"/>
</dbReference>
<dbReference type="GO" id="GO:0140662">
    <property type="term" value="F:ATP-dependent protein folding chaperone"/>
    <property type="evidence" value="ECO:0007669"/>
    <property type="project" value="InterPro"/>
</dbReference>
<dbReference type="GO" id="GO:0005507">
    <property type="term" value="F:copper ion binding"/>
    <property type="evidence" value="ECO:0007005"/>
    <property type="project" value="TAIR"/>
</dbReference>
<dbReference type="GO" id="GO:0003723">
    <property type="term" value="F:RNA binding"/>
    <property type="evidence" value="ECO:0000353"/>
    <property type="project" value="TAIR"/>
</dbReference>
<dbReference type="GO" id="GO:0042026">
    <property type="term" value="P:protein refolding"/>
    <property type="evidence" value="ECO:0007669"/>
    <property type="project" value="InterPro"/>
</dbReference>
<dbReference type="CDD" id="cd03344">
    <property type="entry name" value="GroEL"/>
    <property type="match status" value="1"/>
</dbReference>
<dbReference type="FunFam" id="1.10.560.10:FF:000001">
    <property type="entry name" value="60 kDa chaperonin"/>
    <property type="match status" value="1"/>
</dbReference>
<dbReference type="FunFam" id="3.50.7.10:FF:000001">
    <property type="entry name" value="60 kDa chaperonin"/>
    <property type="match status" value="1"/>
</dbReference>
<dbReference type="Gene3D" id="3.50.7.10">
    <property type="entry name" value="GroEL"/>
    <property type="match status" value="1"/>
</dbReference>
<dbReference type="Gene3D" id="1.10.560.10">
    <property type="entry name" value="GroEL-like equatorial domain"/>
    <property type="match status" value="1"/>
</dbReference>
<dbReference type="Gene3D" id="3.30.260.10">
    <property type="entry name" value="TCP-1-like chaperonin intermediate domain"/>
    <property type="match status" value="1"/>
</dbReference>
<dbReference type="HAMAP" id="MF_00600">
    <property type="entry name" value="CH60"/>
    <property type="match status" value="1"/>
</dbReference>
<dbReference type="InterPro" id="IPR018370">
    <property type="entry name" value="Chaperonin_Cpn60_CS"/>
</dbReference>
<dbReference type="InterPro" id="IPR001844">
    <property type="entry name" value="Cpn60/GroEL"/>
</dbReference>
<dbReference type="InterPro" id="IPR002423">
    <property type="entry name" value="Cpn60/GroEL/TCP-1"/>
</dbReference>
<dbReference type="InterPro" id="IPR027409">
    <property type="entry name" value="GroEL-like_apical_dom_sf"/>
</dbReference>
<dbReference type="InterPro" id="IPR027413">
    <property type="entry name" value="GROEL-like_equatorial_sf"/>
</dbReference>
<dbReference type="InterPro" id="IPR027410">
    <property type="entry name" value="TCP-1-like_intermed_sf"/>
</dbReference>
<dbReference type="NCBIfam" id="TIGR02348">
    <property type="entry name" value="GroEL"/>
    <property type="match status" value="1"/>
</dbReference>
<dbReference type="NCBIfam" id="NF000592">
    <property type="entry name" value="PRK00013.1"/>
    <property type="match status" value="1"/>
</dbReference>
<dbReference type="NCBIfam" id="NF009487">
    <property type="entry name" value="PRK12849.1"/>
    <property type="match status" value="1"/>
</dbReference>
<dbReference type="NCBIfam" id="NF009488">
    <property type="entry name" value="PRK12850.1"/>
    <property type="match status" value="1"/>
</dbReference>
<dbReference type="NCBIfam" id="NF009489">
    <property type="entry name" value="PRK12851.1"/>
    <property type="match status" value="1"/>
</dbReference>
<dbReference type="PANTHER" id="PTHR45633">
    <property type="entry name" value="60 KDA HEAT SHOCK PROTEIN, MITOCHONDRIAL"/>
    <property type="match status" value="1"/>
</dbReference>
<dbReference type="Pfam" id="PF00118">
    <property type="entry name" value="Cpn60_TCP1"/>
    <property type="match status" value="1"/>
</dbReference>
<dbReference type="PRINTS" id="PR00298">
    <property type="entry name" value="CHAPERONIN60"/>
</dbReference>
<dbReference type="SUPFAM" id="SSF52029">
    <property type="entry name" value="GroEL apical domain-like"/>
    <property type="match status" value="1"/>
</dbReference>
<dbReference type="SUPFAM" id="SSF48592">
    <property type="entry name" value="GroEL equatorial domain-like"/>
    <property type="match status" value="1"/>
</dbReference>
<dbReference type="SUPFAM" id="SSF54849">
    <property type="entry name" value="GroEL-intermediate domain like"/>
    <property type="match status" value="1"/>
</dbReference>
<dbReference type="PROSITE" id="PS00296">
    <property type="entry name" value="CHAPERONINS_CPN60"/>
    <property type="match status" value="1"/>
</dbReference>
<evidence type="ECO:0000250" key="1"/>
<evidence type="ECO:0000255" key="2"/>
<evidence type="ECO:0000269" key="3">
    <source>
    </source>
</evidence>
<evidence type="ECO:0000305" key="4"/>
<keyword id="KW-0025">Alternative splicing</keyword>
<keyword id="KW-0067">ATP-binding</keyword>
<keyword id="KW-0143">Chaperone</keyword>
<keyword id="KW-0496">Mitochondrion</keyword>
<keyword id="KW-0547">Nucleotide-binding</keyword>
<keyword id="KW-1185">Reference proteome</keyword>
<keyword id="KW-0346">Stress response</keyword>
<keyword id="KW-0809">Transit peptide</keyword>
<organism>
    <name type="scientific">Arabidopsis thaliana</name>
    <name type="common">Mouse-ear cress</name>
    <dbReference type="NCBI Taxonomy" id="3702"/>
    <lineage>
        <taxon>Eukaryota</taxon>
        <taxon>Viridiplantae</taxon>
        <taxon>Streptophyta</taxon>
        <taxon>Embryophyta</taxon>
        <taxon>Tracheophyta</taxon>
        <taxon>Spermatophyta</taxon>
        <taxon>Magnoliopsida</taxon>
        <taxon>eudicotyledons</taxon>
        <taxon>Gunneridae</taxon>
        <taxon>Pentapetalae</taxon>
        <taxon>rosids</taxon>
        <taxon>malvids</taxon>
        <taxon>Brassicales</taxon>
        <taxon>Brassicaceae</taxon>
        <taxon>Camelineae</taxon>
        <taxon>Arabidopsis</taxon>
    </lineage>
</organism>
<reference key="1">
    <citation type="journal article" date="1999" name="Nature">
        <title>Sequence and analysis of chromosome 2 of the plant Arabidopsis thaliana.</title>
        <authorList>
            <person name="Lin X."/>
            <person name="Kaul S."/>
            <person name="Rounsley S.D."/>
            <person name="Shea T.P."/>
            <person name="Benito M.-I."/>
            <person name="Town C.D."/>
            <person name="Fujii C.Y."/>
            <person name="Mason T.M."/>
            <person name="Bowman C.L."/>
            <person name="Barnstead M.E."/>
            <person name="Feldblyum T.V."/>
            <person name="Buell C.R."/>
            <person name="Ketchum K.A."/>
            <person name="Lee J.J."/>
            <person name="Ronning C.M."/>
            <person name="Koo H.L."/>
            <person name="Moffat K.S."/>
            <person name="Cronin L.A."/>
            <person name="Shen M."/>
            <person name="Pai G."/>
            <person name="Van Aken S."/>
            <person name="Umayam L."/>
            <person name="Tallon L.J."/>
            <person name="Gill J.E."/>
            <person name="Adams M.D."/>
            <person name="Carrera A.J."/>
            <person name="Creasy T.H."/>
            <person name="Goodman H.M."/>
            <person name="Somerville C.R."/>
            <person name="Copenhaver G.P."/>
            <person name="Preuss D."/>
            <person name="Nierman W.C."/>
            <person name="White O."/>
            <person name="Eisen J.A."/>
            <person name="Salzberg S.L."/>
            <person name="Fraser C.M."/>
            <person name="Venter J.C."/>
        </authorList>
    </citation>
    <scope>NUCLEOTIDE SEQUENCE [LARGE SCALE GENOMIC DNA]</scope>
    <source>
        <strain>cv. Columbia</strain>
    </source>
</reference>
<reference key="2">
    <citation type="journal article" date="2017" name="Plant J.">
        <title>Araport11: a complete reannotation of the Arabidopsis thaliana reference genome.</title>
        <authorList>
            <person name="Cheng C.Y."/>
            <person name="Krishnakumar V."/>
            <person name="Chan A.P."/>
            <person name="Thibaud-Nissen F."/>
            <person name="Schobel S."/>
            <person name="Town C.D."/>
        </authorList>
    </citation>
    <scope>GENOME REANNOTATION</scope>
    <source>
        <strain>cv. Columbia</strain>
    </source>
</reference>
<reference key="3">
    <citation type="journal article" date="2003" name="Science">
        <title>Empirical analysis of transcriptional activity in the Arabidopsis genome.</title>
        <authorList>
            <person name="Yamada K."/>
            <person name="Lim J."/>
            <person name="Dale J.M."/>
            <person name="Chen H."/>
            <person name="Shinn P."/>
            <person name="Palm C.J."/>
            <person name="Southwick A.M."/>
            <person name="Wu H.C."/>
            <person name="Kim C.J."/>
            <person name="Nguyen M."/>
            <person name="Pham P.K."/>
            <person name="Cheuk R.F."/>
            <person name="Karlin-Newmann G."/>
            <person name="Liu S.X."/>
            <person name="Lam B."/>
            <person name="Sakano H."/>
            <person name="Wu T."/>
            <person name="Yu G."/>
            <person name="Miranda M."/>
            <person name="Quach H.L."/>
            <person name="Tripp M."/>
            <person name="Chang C.H."/>
            <person name="Lee J.M."/>
            <person name="Toriumi M.J."/>
            <person name="Chan M.M."/>
            <person name="Tang C.C."/>
            <person name="Onodera C.S."/>
            <person name="Deng J.M."/>
            <person name="Akiyama K."/>
            <person name="Ansari Y."/>
            <person name="Arakawa T."/>
            <person name="Banh J."/>
            <person name="Banno F."/>
            <person name="Bowser L."/>
            <person name="Brooks S.Y."/>
            <person name="Carninci P."/>
            <person name="Chao Q."/>
            <person name="Choy N."/>
            <person name="Enju A."/>
            <person name="Goldsmith A.D."/>
            <person name="Gurjal M."/>
            <person name="Hansen N.F."/>
            <person name="Hayashizaki Y."/>
            <person name="Johnson-Hopson C."/>
            <person name="Hsuan V.W."/>
            <person name="Iida K."/>
            <person name="Karnes M."/>
            <person name="Khan S."/>
            <person name="Koesema E."/>
            <person name="Ishida J."/>
            <person name="Jiang P.X."/>
            <person name="Jones T."/>
            <person name="Kawai J."/>
            <person name="Kamiya A."/>
            <person name="Meyers C."/>
            <person name="Nakajima M."/>
            <person name="Narusaka M."/>
            <person name="Seki M."/>
            <person name="Sakurai T."/>
            <person name="Satou M."/>
            <person name="Tamse R."/>
            <person name="Vaysberg M."/>
            <person name="Wallender E.K."/>
            <person name="Wong C."/>
            <person name="Yamamura Y."/>
            <person name="Yuan S."/>
            <person name="Shinozaki K."/>
            <person name="Davis R.W."/>
            <person name="Theologis A."/>
            <person name="Ecker J.R."/>
        </authorList>
    </citation>
    <scope>NUCLEOTIDE SEQUENCE [LARGE SCALE MRNA]</scope>
    <source>
        <strain>cv. Columbia</strain>
    </source>
</reference>
<reference key="4">
    <citation type="submission" date="2004-09" db="EMBL/GenBank/DDBJ databases">
        <title>Large-scale analysis of RIKEN Arabidopsis full-length (RAFL) cDNAs.</title>
        <authorList>
            <person name="Totoki Y."/>
            <person name="Seki M."/>
            <person name="Ishida J."/>
            <person name="Nakajima M."/>
            <person name="Enju A."/>
            <person name="Kamiya A."/>
            <person name="Narusaka M."/>
            <person name="Shin-i T."/>
            <person name="Nakagawa M."/>
            <person name="Sakamoto N."/>
            <person name="Oishi K."/>
            <person name="Kohara Y."/>
            <person name="Kobayashi M."/>
            <person name="Toyoda A."/>
            <person name="Sakaki Y."/>
            <person name="Sakurai T."/>
            <person name="Iida K."/>
            <person name="Akiyama K."/>
            <person name="Satou M."/>
            <person name="Toyoda T."/>
            <person name="Konagaya A."/>
            <person name="Carninci P."/>
            <person name="Kawai J."/>
            <person name="Hayashizaki Y."/>
            <person name="Shinozaki K."/>
        </authorList>
    </citation>
    <scope>NUCLEOTIDE SEQUENCE [LARGE SCALE MRNA]</scope>
    <source>
        <strain>cv. Columbia</strain>
    </source>
</reference>
<reference key="5">
    <citation type="journal article" date="2004" name="Plant Cell">
        <title>Experimental analysis of the Arabidopsis mitochondrial proteome highlights signaling and regulatory components, provides assessment of targeting prediction programs, and indicates plant-specific mitochondrial proteins.</title>
        <authorList>
            <person name="Heazlewood J.L."/>
            <person name="Tonti-Filippini J.S."/>
            <person name="Gout A.M."/>
            <person name="Day D.A."/>
            <person name="Whelan J."/>
            <person name="Millar A.H."/>
        </authorList>
    </citation>
    <scope>IDENTIFICATION BY MASS SPECTROMETRY</scope>
    <scope>SUBCELLULAR LOCATION [LARGE SCALE ANALYSIS]</scope>
    <source>
        <strain>cv. Landsberg erecta</strain>
    </source>
</reference>
<reference key="6">
    <citation type="journal article" date="2007" name="Mol. Cell. Proteomics">
        <title>Multidimensional protein identification technology (MudPIT) analysis of ubiquitinated proteins in plants.</title>
        <authorList>
            <person name="Maor R."/>
            <person name="Jones A."/>
            <person name="Nuehse T.S."/>
            <person name="Studholme D.J."/>
            <person name="Peck S.C."/>
            <person name="Shirasu K."/>
        </authorList>
    </citation>
    <scope>IDENTIFICATION BY MASS SPECTROMETRY [LARGE SCALE ANALYSIS]</scope>
    <source>
        <strain>cv. Landsberg erecta</strain>
    </source>
</reference>